<protein>
    <recommendedName>
        <fullName evidence="1">Ribosomal RNA small subunit methyltransferase H</fullName>
        <ecNumber evidence="1">2.1.1.199</ecNumber>
    </recommendedName>
    <alternativeName>
        <fullName evidence="1">16S rRNA m(4)C1402 methyltransferase</fullName>
    </alternativeName>
    <alternativeName>
        <fullName evidence="1">rRNA (cytosine-N(4)-)-methyltransferase RsmH</fullName>
    </alternativeName>
</protein>
<feature type="chain" id="PRO_0000387045" description="Ribosomal RNA small subunit methyltransferase H">
    <location>
        <begin position="1"/>
        <end position="333"/>
    </location>
</feature>
<feature type="binding site" evidence="1">
    <location>
        <begin position="34"/>
        <end position="36"/>
    </location>
    <ligand>
        <name>S-adenosyl-L-methionine</name>
        <dbReference type="ChEBI" id="CHEBI:59789"/>
    </ligand>
</feature>
<feature type="binding site" evidence="1">
    <location>
        <position position="59"/>
    </location>
    <ligand>
        <name>S-adenosyl-L-methionine</name>
        <dbReference type="ChEBI" id="CHEBI:59789"/>
    </ligand>
</feature>
<feature type="binding site" evidence="1">
    <location>
        <position position="86"/>
    </location>
    <ligand>
        <name>S-adenosyl-L-methionine</name>
        <dbReference type="ChEBI" id="CHEBI:59789"/>
    </ligand>
</feature>
<feature type="binding site" evidence="1">
    <location>
        <position position="112"/>
    </location>
    <ligand>
        <name>S-adenosyl-L-methionine</name>
        <dbReference type="ChEBI" id="CHEBI:59789"/>
    </ligand>
</feature>
<feature type="binding site" evidence="1">
    <location>
        <position position="119"/>
    </location>
    <ligand>
        <name>S-adenosyl-L-methionine</name>
        <dbReference type="ChEBI" id="CHEBI:59789"/>
    </ligand>
</feature>
<sequence length="333" mass="37037">MEHDGYHLPVMVSEVTDLLARRPGIYIDGTLGGGGHAFSVMSALRRSGFENDSLLIGIDQDSFALEEAAGRLRPFASRVRLERGNFSEMAAIIERIRLREGCRLPVMGILLDLGVSSFQIDTPDRGFSYLRQGPLDMRMDPDGGWSAADIVNTAEESELAGIIYRYGEEKKSRAIARAIKARVREKGDFRETAELAAVVRSVVAGHDRQIKSLSRVFQALRIAVNDELGVLESALEDGTACLAPSGRMGVMSYHSLEDRMVKRFFRDKSEDDWGPKGVGLREPLRSAGFKLVTRKSVVASDDEVRINPRARSARLRVIEKKELEGESHDRVYQ</sequence>
<dbReference type="EC" id="2.1.1.199" evidence="1"/>
<dbReference type="EMBL" id="CP001108">
    <property type="protein sequence ID" value="ACF47272.1"/>
    <property type="molecule type" value="Genomic_DNA"/>
</dbReference>
<dbReference type="RefSeq" id="WP_012506802.1">
    <property type="nucleotide sequence ID" value="NC_011059.1"/>
</dbReference>
<dbReference type="SMR" id="B4S6R7"/>
<dbReference type="STRING" id="290512.Paes_2271"/>
<dbReference type="KEGG" id="paa:Paes_2271"/>
<dbReference type="eggNOG" id="COG0275">
    <property type="taxonomic scope" value="Bacteria"/>
</dbReference>
<dbReference type="HOGENOM" id="CLU_038422_3_0_10"/>
<dbReference type="Proteomes" id="UP000002725">
    <property type="component" value="Chromosome"/>
</dbReference>
<dbReference type="GO" id="GO:0005737">
    <property type="term" value="C:cytoplasm"/>
    <property type="evidence" value="ECO:0007669"/>
    <property type="project" value="UniProtKB-SubCell"/>
</dbReference>
<dbReference type="GO" id="GO:0071424">
    <property type="term" value="F:rRNA (cytosine-N4-)-methyltransferase activity"/>
    <property type="evidence" value="ECO:0007669"/>
    <property type="project" value="UniProtKB-UniRule"/>
</dbReference>
<dbReference type="GO" id="GO:0070475">
    <property type="term" value="P:rRNA base methylation"/>
    <property type="evidence" value="ECO:0007669"/>
    <property type="project" value="UniProtKB-UniRule"/>
</dbReference>
<dbReference type="Gene3D" id="1.10.150.170">
    <property type="entry name" value="Putative methyltransferase TM0872, insert domain"/>
    <property type="match status" value="1"/>
</dbReference>
<dbReference type="Gene3D" id="3.40.50.150">
    <property type="entry name" value="Vaccinia Virus protein VP39"/>
    <property type="match status" value="1"/>
</dbReference>
<dbReference type="HAMAP" id="MF_01007">
    <property type="entry name" value="16SrRNA_methyltr_H"/>
    <property type="match status" value="1"/>
</dbReference>
<dbReference type="InterPro" id="IPR002903">
    <property type="entry name" value="RsmH"/>
</dbReference>
<dbReference type="InterPro" id="IPR023397">
    <property type="entry name" value="SAM-dep_MeTrfase_MraW_recog"/>
</dbReference>
<dbReference type="InterPro" id="IPR029063">
    <property type="entry name" value="SAM-dependent_MTases_sf"/>
</dbReference>
<dbReference type="NCBIfam" id="TIGR00006">
    <property type="entry name" value="16S rRNA (cytosine(1402)-N(4))-methyltransferase RsmH"/>
    <property type="match status" value="1"/>
</dbReference>
<dbReference type="PANTHER" id="PTHR11265:SF0">
    <property type="entry name" value="12S RRNA N4-METHYLCYTIDINE METHYLTRANSFERASE"/>
    <property type="match status" value="1"/>
</dbReference>
<dbReference type="PANTHER" id="PTHR11265">
    <property type="entry name" value="S-ADENOSYL-METHYLTRANSFERASE MRAW"/>
    <property type="match status" value="1"/>
</dbReference>
<dbReference type="Pfam" id="PF01795">
    <property type="entry name" value="Methyltransf_5"/>
    <property type="match status" value="1"/>
</dbReference>
<dbReference type="PIRSF" id="PIRSF004486">
    <property type="entry name" value="MraW"/>
    <property type="match status" value="1"/>
</dbReference>
<dbReference type="SUPFAM" id="SSF81799">
    <property type="entry name" value="Putative methyltransferase TM0872, insert domain"/>
    <property type="match status" value="1"/>
</dbReference>
<dbReference type="SUPFAM" id="SSF53335">
    <property type="entry name" value="S-adenosyl-L-methionine-dependent methyltransferases"/>
    <property type="match status" value="1"/>
</dbReference>
<proteinExistence type="inferred from homology"/>
<evidence type="ECO:0000255" key="1">
    <source>
        <dbReference type="HAMAP-Rule" id="MF_01007"/>
    </source>
</evidence>
<reference key="1">
    <citation type="submission" date="2008-06" db="EMBL/GenBank/DDBJ databases">
        <title>Complete sequence of chromosome of Prosthecochloris aestuarii DSM 271.</title>
        <authorList>
            <consortium name="US DOE Joint Genome Institute"/>
            <person name="Lucas S."/>
            <person name="Copeland A."/>
            <person name="Lapidus A."/>
            <person name="Glavina del Rio T."/>
            <person name="Dalin E."/>
            <person name="Tice H."/>
            <person name="Bruce D."/>
            <person name="Goodwin L."/>
            <person name="Pitluck S."/>
            <person name="Schmutz J."/>
            <person name="Larimer F."/>
            <person name="Land M."/>
            <person name="Hauser L."/>
            <person name="Kyrpides N."/>
            <person name="Anderson I."/>
            <person name="Liu Z."/>
            <person name="Li T."/>
            <person name="Zhao F."/>
            <person name="Overmann J."/>
            <person name="Bryant D.A."/>
            <person name="Richardson P."/>
        </authorList>
    </citation>
    <scope>NUCLEOTIDE SEQUENCE [LARGE SCALE GENOMIC DNA]</scope>
    <source>
        <strain>DSM 271 / SK 413</strain>
    </source>
</reference>
<gene>
    <name evidence="1" type="primary">rsmH</name>
    <name type="synonym">mraW</name>
    <name type="ordered locus">Paes_2271</name>
</gene>
<accession>B4S6R7</accession>
<name>RSMH_PROA2</name>
<comment type="function">
    <text evidence="1">Specifically methylates the N4 position of cytidine in position 1402 (C1402) of 16S rRNA.</text>
</comment>
<comment type="catalytic activity">
    <reaction evidence="1">
        <text>cytidine(1402) in 16S rRNA + S-adenosyl-L-methionine = N(4)-methylcytidine(1402) in 16S rRNA + S-adenosyl-L-homocysteine + H(+)</text>
        <dbReference type="Rhea" id="RHEA:42928"/>
        <dbReference type="Rhea" id="RHEA-COMP:10286"/>
        <dbReference type="Rhea" id="RHEA-COMP:10287"/>
        <dbReference type="ChEBI" id="CHEBI:15378"/>
        <dbReference type="ChEBI" id="CHEBI:57856"/>
        <dbReference type="ChEBI" id="CHEBI:59789"/>
        <dbReference type="ChEBI" id="CHEBI:74506"/>
        <dbReference type="ChEBI" id="CHEBI:82748"/>
        <dbReference type="EC" id="2.1.1.199"/>
    </reaction>
</comment>
<comment type="subcellular location">
    <subcellularLocation>
        <location evidence="1">Cytoplasm</location>
    </subcellularLocation>
</comment>
<comment type="similarity">
    <text evidence="1">Belongs to the methyltransferase superfamily. RsmH family.</text>
</comment>
<keyword id="KW-0963">Cytoplasm</keyword>
<keyword id="KW-0489">Methyltransferase</keyword>
<keyword id="KW-0698">rRNA processing</keyword>
<keyword id="KW-0949">S-adenosyl-L-methionine</keyword>
<keyword id="KW-0808">Transferase</keyword>
<organism>
    <name type="scientific">Prosthecochloris aestuarii (strain DSM 271 / SK 413)</name>
    <dbReference type="NCBI Taxonomy" id="290512"/>
    <lineage>
        <taxon>Bacteria</taxon>
        <taxon>Pseudomonadati</taxon>
        <taxon>Chlorobiota</taxon>
        <taxon>Chlorobiia</taxon>
        <taxon>Chlorobiales</taxon>
        <taxon>Chlorobiaceae</taxon>
        <taxon>Prosthecochloris</taxon>
    </lineage>
</organism>